<evidence type="ECO:0000255" key="1">
    <source>
        <dbReference type="HAMAP-Rule" id="MF_00503"/>
    </source>
</evidence>
<evidence type="ECO:0000305" key="2"/>
<sequence length="147" mass="16532">MKVILLKDIKSVGKKGEVINVSDGYARNFLFPRKLAEEANNSNMRVLNLKKDAERKQKLQETEEAQKLANELKGKVLKLSAKAGENGRLFGAITSKDIAAEIKKQFNVDIDKKKVNSETIRKLGNYEIELKLYPEISTKINVLISEG</sequence>
<keyword id="KW-1185">Reference proteome</keyword>
<keyword id="KW-0687">Ribonucleoprotein</keyword>
<keyword id="KW-0689">Ribosomal protein</keyword>
<keyword id="KW-0694">RNA-binding</keyword>
<keyword id="KW-0699">rRNA-binding</keyword>
<name>RL9_CLOAB</name>
<accession>Q97CX9</accession>
<proteinExistence type="inferred from homology"/>
<feature type="chain" id="PRO_0000176632" description="Large ribosomal subunit protein bL9">
    <location>
        <begin position="1"/>
        <end position="147"/>
    </location>
</feature>
<dbReference type="EMBL" id="AE001437">
    <property type="protein sequence ID" value="AAK81637.1"/>
    <property type="molecule type" value="Genomic_DNA"/>
</dbReference>
<dbReference type="PIR" id="B97356">
    <property type="entry name" value="B97356"/>
</dbReference>
<dbReference type="RefSeq" id="NP_350297.1">
    <property type="nucleotide sequence ID" value="NC_003030.1"/>
</dbReference>
<dbReference type="RefSeq" id="WP_010966977.1">
    <property type="nucleotide sequence ID" value="NC_003030.1"/>
</dbReference>
<dbReference type="SMR" id="Q97CX9"/>
<dbReference type="STRING" id="272562.CA_C3717"/>
<dbReference type="GeneID" id="45000213"/>
<dbReference type="KEGG" id="cac:CA_C3717"/>
<dbReference type="PATRIC" id="fig|272562.8.peg.3906"/>
<dbReference type="eggNOG" id="COG0359">
    <property type="taxonomic scope" value="Bacteria"/>
</dbReference>
<dbReference type="HOGENOM" id="CLU_078938_3_0_9"/>
<dbReference type="OrthoDB" id="9788336at2"/>
<dbReference type="Proteomes" id="UP000000814">
    <property type="component" value="Chromosome"/>
</dbReference>
<dbReference type="GO" id="GO:1990904">
    <property type="term" value="C:ribonucleoprotein complex"/>
    <property type="evidence" value="ECO:0007669"/>
    <property type="project" value="UniProtKB-KW"/>
</dbReference>
<dbReference type="GO" id="GO:0005840">
    <property type="term" value="C:ribosome"/>
    <property type="evidence" value="ECO:0007669"/>
    <property type="project" value="UniProtKB-KW"/>
</dbReference>
<dbReference type="GO" id="GO:0019843">
    <property type="term" value="F:rRNA binding"/>
    <property type="evidence" value="ECO:0007669"/>
    <property type="project" value="UniProtKB-UniRule"/>
</dbReference>
<dbReference type="GO" id="GO:0003735">
    <property type="term" value="F:structural constituent of ribosome"/>
    <property type="evidence" value="ECO:0007669"/>
    <property type="project" value="InterPro"/>
</dbReference>
<dbReference type="GO" id="GO:0006412">
    <property type="term" value="P:translation"/>
    <property type="evidence" value="ECO:0007669"/>
    <property type="project" value="UniProtKB-UniRule"/>
</dbReference>
<dbReference type="FunFam" id="3.40.5.10:FF:000002">
    <property type="entry name" value="50S ribosomal protein L9"/>
    <property type="match status" value="1"/>
</dbReference>
<dbReference type="Gene3D" id="3.10.430.100">
    <property type="entry name" value="Ribosomal protein L9, C-terminal domain"/>
    <property type="match status" value="1"/>
</dbReference>
<dbReference type="Gene3D" id="3.40.5.10">
    <property type="entry name" value="Ribosomal protein L9, N-terminal domain"/>
    <property type="match status" value="1"/>
</dbReference>
<dbReference type="HAMAP" id="MF_00503">
    <property type="entry name" value="Ribosomal_bL9"/>
    <property type="match status" value="1"/>
</dbReference>
<dbReference type="InterPro" id="IPR000244">
    <property type="entry name" value="Ribosomal_bL9"/>
</dbReference>
<dbReference type="InterPro" id="IPR009027">
    <property type="entry name" value="Ribosomal_bL9/RNase_H1_N"/>
</dbReference>
<dbReference type="InterPro" id="IPR020594">
    <property type="entry name" value="Ribosomal_bL9_bac/chp"/>
</dbReference>
<dbReference type="InterPro" id="IPR020069">
    <property type="entry name" value="Ribosomal_bL9_C"/>
</dbReference>
<dbReference type="InterPro" id="IPR036791">
    <property type="entry name" value="Ribosomal_bL9_C_sf"/>
</dbReference>
<dbReference type="InterPro" id="IPR020070">
    <property type="entry name" value="Ribosomal_bL9_N"/>
</dbReference>
<dbReference type="InterPro" id="IPR036935">
    <property type="entry name" value="Ribosomal_bL9_N_sf"/>
</dbReference>
<dbReference type="NCBIfam" id="TIGR00158">
    <property type="entry name" value="L9"/>
    <property type="match status" value="1"/>
</dbReference>
<dbReference type="PANTHER" id="PTHR21368">
    <property type="entry name" value="50S RIBOSOMAL PROTEIN L9"/>
    <property type="match status" value="1"/>
</dbReference>
<dbReference type="Pfam" id="PF03948">
    <property type="entry name" value="Ribosomal_L9_C"/>
    <property type="match status" value="1"/>
</dbReference>
<dbReference type="Pfam" id="PF01281">
    <property type="entry name" value="Ribosomal_L9_N"/>
    <property type="match status" value="1"/>
</dbReference>
<dbReference type="SUPFAM" id="SSF55658">
    <property type="entry name" value="L9 N-domain-like"/>
    <property type="match status" value="1"/>
</dbReference>
<dbReference type="SUPFAM" id="SSF55653">
    <property type="entry name" value="Ribosomal protein L9 C-domain"/>
    <property type="match status" value="1"/>
</dbReference>
<dbReference type="PROSITE" id="PS00651">
    <property type="entry name" value="RIBOSOMAL_L9"/>
    <property type="match status" value="1"/>
</dbReference>
<organism>
    <name type="scientific">Clostridium acetobutylicum (strain ATCC 824 / DSM 792 / JCM 1419 / IAM 19013 / LMG 5710 / NBRC 13948 / NRRL B-527 / VKM B-1787 / 2291 / W)</name>
    <dbReference type="NCBI Taxonomy" id="272562"/>
    <lineage>
        <taxon>Bacteria</taxon>
        <taxon>Bacillati</taxon>
        <taxon>Bacillota</taxon>
        <taxon>Clostridia</taxon>
        <taxon>Eubacteriales</taxon>
        <taxon>Clostridiaceae</taxon>
        <taxon>Clostridium</taxon>
    </lineage>
</organism>
<comment type="function">
    <text evidence="1">Binds to the 23S rRNA.</text>
</comment>
<comment type="similarity">
    <text evidence="1">Belongs to the bacterial ribosomal protein bL9 family.</text>
</comment>
<gene>
    <name evidence="1" type="primary">rplI</name>
    <name type="ordered locus">CA_C3717</name>
</gene>
<reference key="1">
    <citation type="journal article" date="2001" name="J. Bacteriol.">
        <title>Genome sequence and comparative analysis of the solvent-producing bacterium Clostridium acetobutylicum.</title>
        <authorList>
            <person name="Noelling J."/>
            <person name="Breton G."/>
            <person name="Omelchenko M.V."/>
            <person name="Makarova K.S."/>
            <person name="Zeng Q."/>
            <person name="Gibson R."/>
            <person name="Lee H.M."/>
            <person name="Dubois J."/>
            <person name="Qiu D."/>
            <person name="Hitti J."/>
            <person name="Wolf Y.I."/>
            <person name="Tatusov R.L."/>
            <person name="Sabathe F."/>
            <person name="Doucette-Stamm L.A."/>
            <person name="Soucaille P."/>
            <person name="Daly M.J."/>
            <person name="Bennett G.N."/>
            <person name="Koonin E.V."/>
            <person name="Smith D.R."/>
        </authorList>
    </citation>
    <scope>NUCLEOTIDE SEQUENCE [LARGE SCALE GENOMIC DNA]</scope>
    <source>
        <strain>ATCC 824 / DSM 792 / JCM 1419 / IAM 19013 / LMG 5710 / NBRC 13948 / NRRL B-527 / VKM B-1787 / 2291 / W</strain>
    </source>
</reference>
<protein>
    <recommendedName>
        <fullName evidence="1">Large ribosomal subunit protein bL9</fullName>
    </recommendedName>
    <alternativeName>
        <fullName evidence="2">50S ribosomal protein L9</fullName>
    </alternativeName>
</protein>